<name>SMG_NITEC</name>
<accession>Q0AIZ8</accession>
<protein>
    <recommendedName>
        <fullName evidence="1">Protein Smg homolog</fullName>
    </recommendedName>
</protein>
<feature type="chain" id="PRO_1000025657" description="Protein Smg homolog">
    <location>
        <begin position="1"/>
        <end position="152"/>
    </location>
</feature>
<comment type="similarity">
    <text evidence="1">Belongs to the Smg family.</text>
</comment>
<reference key="1">
    <citation type="journal article" date="2007" name="Environ. Microbiol.">
        <title>Whole-genome analysis of the ammonia-oxidizing bacterium, Nitrosomonas eutropha C91: implications for niche adaptation.</title>
        <authorList>
            <person name="Stein L.Y."/>
            <person name="Arp D.J."/>
            <person name="Berube P.M."/>
            <person name="Chain P.S."/>
            <person name="Hauser L."/>
            <person name="Jetten M.S."/>
            <person name="Klotz M.G."/>
            <person name="Larimer F.W."/>
            <person name="Norton J.M."/>
            <person name="Op den Camp H.J.M."/>
            <person name="Shin M."/>
            <person name="Wei X."/>
        </authorList>
    </citation>
    <scope>NUCLEOTIDE SEQUENCE [LARGE SCALE GENOMIC DNA]</scope>
    <source>
        <strain>DSM 101675 / C91 / Nm57</strain>
    </source>
</reference>
<dbReference type="EMBL" id="CP000450">
    <property type="protein sequence ID" value="ABI58673.1"/>
    <property type="molecule type" value="Genomic_DNA"/>
</dbReference>
<dbReference type="RefSeq" id="WP_011633515.1">
    <property type="nucleotide sequence ID" value="NC_008344.1"/>
</dbReference>
<dbReference type="SMR" id="Q0AIZ8"/>
<dbReference type="STRING" id="335283.Neut_0395"/>
<dbReference type="KEGG" id="net:Neut_0395"/>
<dbReference type="eggNOG" id="COG2922">
    <property type="taxonomic scope" value="Bacteria"/>
</dbReference>
<dbReference type="HOGENOM" id="CLU_133242_0_0_4"/>
<dbReference type="OrthoDB" id="5297467at2"/>
<dbReference type="Proteomes" id="UP000001966">
    <property type="component" value="Chromosome"/>
</dbReference>
<dbReference type="HAMAP" id="MF_00598">
    <property type="entry name" value="Smg"/>
    <property type="match status" value="1"/>
</dbReference>
<dbReference type="InterPro" id="IPR007456">
    <property type="entry name" value="Smg"/>
</dbReference>
<dbReference type="PANTHER" id="PTHR38692">
    <property type="entry name" value="PROTEIN SMG"/>
    <property type="match status" value="1"/>
</dbReference>
<dbReference type="PANTHER" id="PTHR38692:SF1">
    <property type="entry name" value="PROTEIN SMG"/>
    <property type="match status" value="1"/>
</dbReference>
<dbReference type="Pfam" id="PF04361">
    <property type="entry name" value="DUF494"/>
    <property type="match status" value="1"/>
</dbReference>
<organism>
    <name type="scientific">Nitrosomonas eutropha (strain DSM 101675 / C91 / Nm57)</name>
    <dbReference type="NCBI Taxonomy" id="335283"/>
    <lineage>
        <taxon>Bacteria</taxon>
        <taxon>Pseudomonadati</taxon>
        <taxon>Pseudomonadota</taxon>
        <taxon>Betaproteobacteria</taxon>
        <taxon>Nitrosomonadales</taxon>
        <taxon>Nitrosomonadaceae</taxon>
        <taxon>Nitrosomonas</taxon>
    </lineage>
</organism>
<proteinExistence type="inferred from homology"/>
<evidence type="ECO:0000255" key="1">
    <source>
        <dbReference type="HAMAP-Rule" id="MF_00598"/>
    </source>
</evidence>
<sequence>MFDILVYLFENYFDTGNYPDSATLTRKLTMAGFDDEEITLALDWLSEFSHHDTEGYLAGLAESNSMRHFTKEEMEIIDTEGRGFIFFLEQAGVINPLQRELLIDRVIRMDGDTSSVEKIKLVVLFDLWIQNQLADSNTIEKLFVVSDSHQRH</sequence>
<gene>
    <name evidence="1" type="primary">smg</name>
    <name type="ordered locus">Neut_0395</name>
</gene>